<feature type="chain" id="PRO_0000048578" description="SWI/SNF-related matrix-associated actin-dependent regulator of chromatin subfamily E member 1">
    <location>
        <begin position="1"/>
        <end position="411"/>
    </location>
</feature>
<feature type="DNA-binding region" description="HMG box" evidence="4">
    <location>
        <begin position="66"/>
        <end position="134"/>
    </location>
</feature>
<feature type="region of interest" description="Disordered" evidence="5">
    <location>
        <begin position="1"/>
        <end position="23"/>
    </location>
</feature>
<feature type="region of interest" description="Disordered" evidence="5">
    <location>
        <begin position="42"/>
        <end position="70"/>
    </location>
</feature>
<feature type="region of interest" description="Disordered" evidence="5">
    <location>
        <begin position="153"/>
        <end position="175"/>
    </location>
</feature>
<feature type="region of interest" description="Disordered" evidence="5">
    <location>
        <begin position="294"/>
        <end position="411"/>
    </location>
</feature>
<feature type="coiled-coil region" evidence="3">
    <location>
        <begin position="222"/>
        <end position="319"/>
    </location>
</feature>
<feature type="compositionally biased region" description="Polar residues" evidence="5">
    <location>
        <begin position="46"/>
        <end position="57"/>
    </location>
</feature>
<feature type="compositionally biased region" description="Basic and acidic residues" evidence="5">
    <location>
        <begin position="153"/>
        <end position="168"/>
    </location>
</feature>
<feature type="compositionally biased region" description="Basic and acidic residues" evidence="5">
    <location>
        <begin position="294"/>
        <end position="312"/>
    </location>
</feature>
<feature type="compositionally biased region" description="Polar residues" evidence="5">
    <location>
        <begin position="352"/>
        <end position="363"/>
    </location>
</feature>
<feature type="compositionally biased region" description="Polar residues" evidence="5">
    <location>
        <begin position="382"/>
        <end position="394"/>
    </location>
</feature>
<feature type="modified residue" description="Omega-N-methylarginine" evidence="2">
    <location>
        <position position="4"/>
    </location>
</feature>
<feature type="modified residue" description="Omega-N-methylarginine" evidence="2">
    <location>
        <position position="40"/>
    </location>
</feature>
<feature type="modified residue" description="Phosphoserine" evidence="2">
    <location>
        <position position="265"/>
    </location>
</feature>
<feature type="cross-link" description="Glycyl lysine isopeptide (Lys-Gly) (interchain with G-Cter in SUMO2)" evidence="2">
    <location>
        <position position="3"/>
    </location>
</feature>
<feature type="cross-link" description="Glycyl lysine isopeptide (Lys-Gly) (interchain with G-Cter in SUMO1); alternate" evidence="2">
    <location>
        <position position="92"/>
    </location>
</feature>
<feature type="cross-link" description="Glycyl lysine isopeptide (Lys-Gly) (interchain with G-Cter in SUMO2); alternate" evidence="2">
    <location>
        <position position="92"/>
    </location>
</feature>
<feature type="cross-link" description="Glycyl lysine isopeptide (Lys-Gly) (interchain with G-Cter in SUMO2)" evidence="2">
    <location>
        <position position="131"/>
    </location>
</feature>
<feature type="cross-link" description="Glycyl lysine isopeptide (Lys-Gly) (interchain with G-Cter in SUMO2)" evidence="2">
    <location>
        <position position="146"/>
    </location>
</feature>
<feature type="cross-link" description="Glycyl lysine isopeptide (Lys-Gly) (interchain with G-Cter in SUMO2)" evidence="2">
    <location>
        <position position="166"/>
    </location>
</feature>
<feature type="cross-link" description="Glycyl lysine isopeptide (Lys-Gly) (interchain with G-Cter in SUMO2)" evidence="2">
    <location>
        <position position="277"/>
    </location>
</feature>
<dbReference type="EMBL" id="AF035263">
    <property type="protein sequence ID" value="AAC04510.1"/>
    <property type="molecule type" value="Genomic_DNA"/>
</dbReference>
<dbReference type="EMBL" id="AK076177">
    <property type="protein sequence ID" value="BAC36233.1"/>
    <property type="status" value="ALT_SEQ"/>
    <property type="molecule type" value="mRNA"/>
</dbReference>
<dbReference type="EMBL" id="BC047141">
    <property type="protein sequence ID" value="AAH47141.1"/>
    <property type="molecule type" value="mRNA"/>
</dbReference>
<dbReference type="EMBL" id="BC061498">
    <property type="protein sequence ID" value="AAH61498.1"/>
    <property type="molecule type" value="mRNA"/>
</dbReference>
<dbReference type="EMBL" id="BC065043">
    <property type="protein sequence ID" value="AAH65043.1"/>
    <property type="molecule type" value="mRNA"/>
</dbReference>
<dbReference type="CCDS" id="CCDS25374.1"/>
<dbReference type="RefSeq" id="NP_065643.1">
    <property type="nucleotide sequence ID" value="NM_020618.4"/>
</dbReference>
<dbReference type="SMR" id="O54941"/>
<dbReference type="BioGRID" id="208275">
    <property type="interactions" value="27"/>
</dbReference>
<dbReference type="ComplexPortal" id="CPX-1232">
    <property type="entry name" value="SWI/SNF ATP-dependent chromatin remodeling complex, ACTL6A-ARID1A-SMARCA2 variant"/>
</dbReference>
<dbReference type="ComplexPortal" id="CPX-1233">
    <property type="entry name" value="SWI/SNF ATP-dependent chromatin remodeling complex, ACTL6A-ARID1A-SMARCA4 variant"/>
</dbReference>
<dbReference type="ComplexPortal" id="CPX-1234">
    <property type="entry name" value="SWI/SNF ATP-dependent chromatin remodeling complex, ACTL6A-ARID1B-SMARCA2 variant"/>
</dbReference>
<dbReference type="ComplexPortal" id="CPX-1235">
    <property type="entry name" value="SWI/SNF ATP-dependent chromatin remodeling complex, ACTL6A-ARID1B-SMARCA4 variant"/>
</dbReference>
<dbReference type="ComplexPortal" id="CPX-1236">
    <property type="entry name" value="SWI/SNF ATP-dependent chromatin remodeling complex, ACTL6B-ARID1A-SMARCA2 variant"/>
</dbReference>
<dbReference type="ComplexPortal" id="CPX-1237">
    <property type="entry name" value="SWI/SNF ATP-dependent chromatin remodeling complex, ACTL6B-ARID1A-SMARCA4 variant"/>
</dbReference>
<dbReference type="ComplexPortal" id="CPX-1238">
    <property type="entry name" value="SWI/SNF ATP-dependent chromatin remodeling complex, ACTL6B-ARID1B-SMARCA2 variant"/>
</dbReference>
<dbReference type="ComplexPortal" id="CPX-1239">
    <property type="entry name" value="SWI/SNF ATP-dependent chromatin remodeling complex, ACTL6B-ARID1B-SMARCA4 variant"/>
</dbReference>
<dbReference type="ComplexPortal" id="CPX-1240">
    <property type="entry name" value="Muscle cell-specific SWI/SNF ATP-dependent chromatin remodeling complex, ACTL6A-ARID1A-SMARCA2 variant"/>
</dbReference>
<dbReference type="ComplexPortal" id="CPX-1241">
    <property type="entry name" value="Muscle cell-specific SWI/SNF ATP-dependent chromatin remodeling complex, ACTL6A-ARID1A-SMARCA4 variant"/>
</dbReference>
<dbReference type="ComplexPortal" id="CPX-1242">
    <property type="entry name" value="Muscle cell-specific SWI/SNF ATP-dependent chromatin remodeling complex, ACTL6A-ARID1B-SMARCA2 variant"/>
</dbReference>
<dbReference type="ComplexPortal" id="CPX-1243">
    <property type="entry name" value="Muscle cell-specific SWI/SNF ATP-dependent chromatin remodeling complex, ACTL6A-ARID1B-SMARCA4 variant"/>
</dbReference>
<dbReference type="ComplexPortal" id="CPX-1244">
    <property type="entry name" value="Muscle cell-specific SWI/SNF ATP-dependent chromatin remodeling complex, ACTL6B-ARID1A-SMARCA2 variant"/>
</dbReference>
<dbReference type="ComplexPortal" id="CPX-1245">
    <property type="entry name" value="Muscle cell-specific SWI/SNF ATP-dependent chromatin remodeling complex, ACTL6B-ARID1A-SMARCA4 variant"/>
</dbReference>
<dbReference type="ComplexPortal" id="CPX-1246">
    <property type="entry name" value="Muscle cell-specific SWI/SNF ATP-dependent chromatin remodeling complex, ACTL6B-ARID1B-SMARCA2 variant"/>
</dbReference>
<dbReference type="ComplexPortal" id="CPX-1247">
    <property type="entry name" value="Muscle cell-specific SWI/SNF ATP-dependent chromatin remodeling complex, ACTL6B-ARID1B-SMARCA4 variant"/>
</dbReference>
<dbReference type="ComplexPortal" id="CPX-1248">
    <property type="entry name" value="Polybromo-associated SWI/SNF ATP-dependent chromatin remodeling complex, ACTL6A variant"/>
</dbReference>
<dbReference type="ComplexPortal" id="CPX-1250">
    <property type="entry name" value="Polybromo-associated SWI/SNF ATP-dependent chromatin remodeling complex, ACTL6B variant"/>
</dbReference>
<dbReference type="ComplexPortal" id="CPX-1251">
    <property type="entry name" value="Embryonic stem cell-specific SWI/SNF ATP-dependent chromatin remodeling complex"/>
</dbReference>
<dbReference type="ComplexPortal" id="CPX-1252">
    <property type="entry name" value="Neural progenitor-specific SWI/SNF ATP-dependent chromatin remodeling complex, ARID1A-SMARCA2 variant"/>
</dbReference>
<dbReference type="ComplexPortal" id="CPX-1253">
    <property type="entry name" value="Neural progenitor-specific SWI/SNF ATP-dependent chromatin remodeling complex, ARID1A-SMARCA4 variant"/>
</dbReference>
<dbReference type="ComplexPortal" id="CPX-1254">
    <property type="entry name" value="Neural progenitor-specific SWI/SNF ATP-dependent chromatin remodeling complex, ARID1B-SMARCA2 variant"/>
</dbReference>
<dbReference type="ComplexPortal" id="CPX-1255">
    <property type="entry name" value="Neural progenitor-specific SWI/SNF ATP-dependent chromatin remodeling complex, ARID1B-SMARCA4 variant"/>
</dbReference>
<dbReference type="ComplexPortal" id="CPX-1256">
    <property type="entry name" value="Neuron-specific SWI/SNF ATP-dependent chromatin remodeling complex, ARID1A-SMARCA2 variant"/>
</dbReference>
<dbReference type="ComplexPortal" id="CPX-1257">
    <property type="entry name" value="Neuron-specific SWI/SNF ATP-dependent chromatin remodeling complex, ARID1A-SMARCA4 variant"/>
</dbReference>
<dbReference type="ComplexPortal" id="CPX-1258">
    <property type="entry name" value="Neuron-specific SWI/SNF ATP-dependent chromatin remodeling complex, ARID1B-SMARCA2 variant"/>
</dbReference>
<dbReference type="ComplexPortal" id="CPX-1259">
    <property type="entry name" value="Neuron-specific SWI/SNF ATP-dependent chromatin remodeling complex, ARID1B-SMARCA4 variant"/>
</dbReference>
<dbReference type="ComplexPortal" id="CPX-1261">
    <property type="entry name" value="Brain-specific SWI/SNF ATP-dependent chromatin remodeling complex, ARID1A-SMARCA2 variant"/>
</dbReference>
<dbReference type="ComplexPortal" id="CPX-1262">
    <property type="entry name" value="Brain-specific SWI/SNF ATP-dependent chromatin remodeling complex, ARID1A-SMARCA4 variant"/>
</dbReference>
<dbReference type="ComplexPortal" id="CPX-1263">
    <property type="entry name" value="Brain-specific SWI/SNF ATP-dependent chromatin remodeling complex, ARID1B-SMARCA2 variant"/>
</dbReference>
<dbReference type="ComplexPortal" id="CPX-1264">
    <property type="entry name" value="Brain-specific SWI/SNF ATP-dependent chromatin remodeling complex, ARID1B-SMARCA4 variant"/>
</dbReference>
<dbReference type="CORUM" id="O54941"/>
<dbReference type="DIP" id="DIP-39985N"/>
<dbReference type="FunCoup" id="O54941">
    <property type="interactions" value="3612"/>
</dbReference>
<dbReference type="IntAct" id="O54941">
    <property type="interactions" value="14"/>
</dbReference>
<dbReference type="MINT" id="O54941"/>
<dbReference type="STRING" id="10090.ENSMUSP00000099422"/>
<dbReference type="GlyGen" id="O54941">
    <property type="glycosylation" value="2 sites"/>
</dbReference>
<dbReference type="iPTMnet" id="O54941"/>
<dbReference type="PhosphoSitePlus" id="O54941"/>
<dbReference type="SwissPalm" id="O54941"/>
<dbReference type="PaxDb" id="10090-ENSMUSP00000099422"/>
<dbReference type="PeptideAtlas" id="O54941"/>
<dbReference type="ProteomicsDB" id="261088"/>
<dbReference type="Pumba" id="O54941"/>
<dbReference type="Antibodypedia" id="1299">
    <property type="antibodies" value="403 antibodies from 42 providers"/>
</dbReference>
<dbReference type="DNASU" id="57376"/>
<dbReference type="Ensembl" id="ENSMUST00000103133.4">
    <property type="protein sequence ID" value="ENSMUSP00000099422.4"/>
    <property type="gene ID" value="ENSMUSG00000037935.17"/>
</dbReference>
<dbReference type="GeneID" id="57376"/>
<dbReference type="KEGG" id="mmu:57376"/>
<dbReference type="UCSC" id="uc007lii.1">
    <property type="organism name" value="mouse"/>
</dbReference>
<dbReference type="AGR" id="MGI:1927347"/>
<dbReference type="CTD" id="6605"/>
<dbReference type="MGI" id="MGI:1927347">
    <property type="gene designation" value="Smarce1"/>
</dbReference>
<dbReference type="VEuPathDB" id="HostDB:ENSMUSG00000037935"/>
<dbReference type="eggNOG" id="KOG4715">
    <property type="taxonomic scope" value="Eukaryota"/>
</dbReference>
<dbReference type="GeneTree" id="ENSGT00390000003628"/>
<dbReference type="HOGENOM" id="CLU_021772_1_1_1"/>
<dbReference type="InParanoid" id="O54941"/>
<dbReference type="OMA" id="ISEIXSE"/>
<dbReference type="OrthoDB" id="30931at2759"/>
<dbReference type="PhylomeDB" id="O54941"/>
<dbReference type="TreeFam" id="TF321146"/>
<dbReference type="Reactome" id="R-MMU-3214858">
    <property type="pathway name" value="RMTs methylate histone arginines"/>
</dbReference>
<dbReference type="Reactome" id="R-MMU-8939243">
    <property type="pathway name" value="RUNX1 interacts with co-factors whose precise effect on RUNX1 targets is not known"/>
</dbReference>
<dbReference type="BioGRID-ORCS" id="57376">
    <property type="hits" value="12 hits in 86 CRISPR screens"/>
</dbReference>
<dbReference type="ChiTaRS" id="Smarce1">
    <property type="organism name" value="mouse"/>
</dbReference>
<dbReference type="PRO" id="PR:O54941"/>
<dbReference type="Proteomes" id="UP000000589">
    <property type="component" value="Chromosome 11"/>
</dbReference>
<dbReference type="RNAct" id="O54941">
    <property type="molecule type" value="protein"/>
</dbReference>
<dbReference type="Bgee" id="ENSMUSG00000037935">
    <property type="expression patterns" value="Expressed in undifferentiated genital tubercle and 285 other cell types or tissues"/>
</dbReference>
<dbReference type="GO" id="GO:0140092">
    <property type="term" value="C:bBAF complex"/>
    <property type="evidence" value="ECO:0000303"/>
    <property type="project" value="ComplexPortal"/>
</dbReference>
<dbReference type="GO" id="GO:0035060">
    <property type="term" value="C:brahma complex"/>
    <property type="evidence" value="ECO:0000303"/>
    <property type="project" value="ComplexPortal"/>
</dbReference>
<dbReference type="GO" id="GO:0000785">
    <property type="term" value="C:chromatin"/>
    <property type="evidence" value="ECO:0000303"/>
    <property type="project" value="ComplexPortal"/>
</dbReference>
<dbReference type="GO" id="GO:0000776">
    <property type="term" value="C:kinetochore"/>
    <property type="evidence" value="ECO:0000303"/>
    <property type="project" value="ComplexPortal"/>
</dbReference>
<dbReference type="GO" id="GO:0071565">
    <property type="term" value="C:nBAF complex"/>
    <property type="evidence" value="ECO:0000314"/>
    <property type="project" value="UniProtKB"/>
</dbReference>
<dbReference type="GO" id="GO:0071564">
    <property type="term" value="C:npBAF complex"/>
    <property type="evidence" value="ECO:0000314"/>
    <property type="project" value="UniProtKB"/>
</dbReference>
<dbReference type="GO" id="GO:0016363">
    <property type="term" value="C:nuclear matrix"/>
    <property type="evidence" value="ECO:0000303"/>
    <property type="project" value="ComplexPortal"/>
</dbReference>
<dbReference type="GO" id="GO:0005654">
    <property type="term" value="C:nucleoplasm"/>
    <property type="evidence" value="ECO:0000304"/>
    <property type="project" value="Reactome"/>
</dbReference>
<dbReference type="GO" id="GO:0016586">
    <property type="term" value="C:RSC-type complex"/>
    <property type="evidence" value="ECO:0000303"/>
    <property type="project" value="ComplexPortal"/>
</dbReference>
<dbReference type="GO" id="GO:0016514">
    <property type="term" value="C:SWI/SNF complex"/>
    <property type="evidence" value="ECO:0000314"/>
    <property type="project" value="MGI"/>
</dbReference>
<dbReference type="GO" id="GO:0003677">
    <property type="term" value="F:DNA binding"/>
    <property type="evidence" value="ECO:0007669"/>
    <property type="project" value="UniProtKB-KW"/>
</dbReference>
<dbReference type="GO" id="GO:0008080">
    <property type="term" value="F:N-acetyltransferase activity"/>
    <property type="evidence" value="ECO:0007669"/>
    <property type="project" value="Ensembl"/>
</dbReference>
<dbReference type="GO" id="GO:0016922">
    <property type="term" value="F:nuclear receptor binding"/>
    <property type="evidence" value="ECO:0007669"/>
    <property type="project" value="Ensembl"/>
</dbReference>
<dbReference type="GO" id="GO:0003723">
    <property type="term" value="F:RNA binding"/>
    <property type="evidence" value="ECO:0000314"/>
    <property type="project" value="MGI"/>
</dbReference>
<dbReference type="GO" id="GO:0006338">
    <property type="term" value="P:chromatin remodeling"/>
    <property type="evidence" value="ECO:0000303"/>
    <property type="project" value="ComplexPortal"/>
</dbReference>
<dbReference type="GO" id="GO:0045892">
    <property type="term" value="P:negative regulation of DNA-templated transcription"/>
    <property type="evidence" value="ECO:0007669"/>
    <property type="project" value="Ensembl"/>
</dbReference>
<dbReference type="GO" id="GO:0022008">
    <property type="term" value="P:neurogenesis"/>
    <property type="evidence" value="ECO:0000316"/>
    <property type="project" value="MGI"/>
</dbReference>
<dbReference type="GO" id="GO:0006337">
    <property type="term" value="P:nucleosome disassembly"/>
    <property type="evidence" value="ECO:0007669"/>
    <property type="project" value="Ensembl"/>
</dbReference>
<dbReference type="GO" id="GO:0045597">
    <property type="term" value="P:positive regulation of cell differentiation"/>
    <property type="evidence" value="ECO:0000303"/>
    <property type="project" value="ComplexPortal"/>
</dbReference>
<dbReference type="GO" id="GO:2000781">
    <property type="term" value="P:positive regulation of double-strand break repair"/>
    <property type="evidence" value="ECO:0000303"/>
    <property type="project" value="ComplexPortal"/>
</dbReference>
<dbReference type="GO" id="GO:0045663">
    <property type="term" value="P:positive regulation of myoblast differentiation"/>
    <property type="evidence" value="ECO:0000303"/>
    <property type="project" value="ComplexPortal"/>
</dbReference>
<dbReference type="GO" id="GO:1902459">
    <property type="term" value="P:positive regulation of stem cell population maintenance"/>
    <property type="evidence" value="ECO:0000303"/>
    <property type="project" value="ComplexPortal"/>
</dbReference>
<dbReference type="GO" id="GO:0045582">
    <property type="term" value="P:positive regulation of T cell differentiation"/>
    <property type="evidence" value="ECO:0000303"/>
    <property type="project" value="ComplexPortal"/>
</dbReference>
<dbReference type="GO" id="GO:0070316">
    <property type="term" value="P:regulation of G0 to G1 transition"/>
    <property type="evidence" value="ECO:0000303"/>
    <property type="project" value="ComplexPortal"/>
</dbReference>
<dbReference type="GO" id="GO:2000045">
    <property type="term" value="P:regulation of G1/S transition of mitotic cell cycle"/>
    <property type="evidence" value="ECO:0000303"/>
    <property type="project" value="ComplexPortal"/>
</dbReference>
<dbReference type="GO" id="GO:0030071">
    <property type="term" value="P:regulation of mitotic metaphase/anaphase transition"/>
    <property type="evidence" value="ECO:0000303"/>
    <property type="project" value="ComplexPortal"/>
</dbReference>
<dbReference type="GO" id="GO:2000819">
    <property type="term" value="P:regulation of nucleotide-excision repair"/>
    <property type="evidence" value="ECO:0000303"/>
    <property type="project" value="ComplexPortal"/>
</dbReference>
<dbReference type="GO" id="GO:0006357">
    <property type="term" value="P:regulation of transcription by RNA polymerase II"/>
    <property type="evidence" value="ECO:0000303"/>
    <property type="project" value="ComplexPortal"/>
</dbReference>
<dbReference type="CDD" id="cd21983">
    <property type="entry name" value="HMG-box_SMARCE1"/>
    <property type="match status" value="1"/>
</dbReference>
<dbReference type="FunFam" id="1.10.30.10:FF:000011">
    <property type="entry name" value="Putative SWI/SNF-related matrix-associated actin-dependent regulator of chromatin subfamily E member 1"/>
    <property type="match status" value="1"/>
</dbReference>
<dbReference type="Gene3D" id="1.10.30.10">
    <property type="entry name" value="High mobility group box domain"/>
    <property type="match status" value="1"/>
</dbReference>
<dbReference type="InterPro" id="IPR009071">
    <property type="entry name" value="HMG_box_dom"/>
</dbReference>
<dbReference type="InterPro" id="IPR036910">
    <property type="entry name" value="HMG_box_dom_sf"/>
</dbReference>
<dbReference type="PANTHER" id="PTHR46232">
    <property type="entry name" value="SMARCE1 REGULATOR OF CHROMATIN"/>
    <property type="match status" value="1"/>
</dbReference>
<dbReference type="PANTHER" id="PTHR46232:SF1">
    <property type="entry name" value="SWI_SNF-RELATED MATRIX-ASSOCIATED ACTIN-DEPENDENT REGULATOR OF CHROMATIN SUBFAMILY E MEMBER 1"/>
    <property type="match status" value="1"/>
</dbReference>
<dbReference type="Pfam" id="PF00505">
    <property type="entry name" value="HMG_box"/>
    <property type="match status" value="1"/>
</dbReference>
<dbReference type="SMART" id="SM00398">
    <property type="entry name" value="HMG"/>
    <property type="match status" value="1"/>
</dbReference>
<dbReference type="SUPFAM" id="SSF47095">
    <property type="entry name" value="HMG-box"/>
    <property type="match status" value="1"/>
</dbReference>
<dbReference type="PROSITE" id="PS50118">
    <property type="entry name" value="HMG_BOX_2"/>
    <property type="match status" value="1"/>
</dbReference>
<proteinExistence type="evidence at protein level"/>
<keyword id="KW-0156">Chromatin regulator</keyword>
<keyword id="KW-0175">Coiled coil</keyword>
<keyword id="KW-0238">DNA-binding</keyword>
<keyword id="KW-1017">Isopeptide bond</keyword>
<keyword id="KW-0488">Methylation</keyword>
<keyword id="KW-0524">Neurogenesis</keyword>
<keyword id="KW-0539">Nucleus</keyword>
<keyword id="KW-0597">Phosphoprotein</keyword>
<keyword id="KW-1185">Reference proteome</keyword>
<keyword id="KW-0832">Ubl conjugation</keyword>
<evidence type="ECO:0000250" key="1">
    <source>
        <dbReference type="UniProtKB" id="Q56A18"/>
    </source>
</evidence>
<evidence type="ECO:0000250" key="2">
    <source>
        <dbReference type="UniProtKB" id="Q969G3"/>
    </source>
</evidence>
<evidence type="ECO:0000255" key="3"/>
<evidence type="ECO:0000255" key="4">
    <source>
        <dbReference type="PROSITE-ProRule" id="PRU00267"/>
    </source>
</evidence>
<evidence type="ECO:0000256" key="5">
    <source>
        <dbReference type="SAM" id="MobiDB-lite"/>
    </source>
</evidence>
<evidence type="ECO:0000269" key="6">
    <source>
    </source>
</evidence>
<evidence type="ECO:0000269" key="7">
    <source>
    </source>
</evidence>
<evidence type="ECO:0000269" key="8">
    <source>
    </source>
</evidence>
<evidence type="ECO:0000305" key="9"/>
<sequence>MSKRPSYAPPPTPAPATQMPSTPGFVGYNPYSHLAYNNYRLGGNPGTNSRVTASSGITIPKPPKPPDKPLMPYMRYSRKVWDQVKASNPDLKLWEIGKIIGGMWRDLTDEEKQEYLNEYEAEKIEYNESMKAYHNSPAYLAYINAKSRAEAALEEESRQRQSRMEKGEPYMSIQPAEDPDDYDDGFSMKHTATARFQRNHRLISEILSESVVPDVRSVVTTARMQVLKRQVQSLMVHQRKLEAELLQIEERHQEKKRKFLESTDSFNNELKRLCGLKVEVDMEKIAAEIAQAEEQARKRQEEREKEAAEQAERSQSSMAPEEEQVANKAEEKKDEESIPMETEETHLEDTAESQQNGEEGTSTPEDKESGQEGVDSMEVEGTSDSNTGSESNSATVEEPPTDPVPEDEKKE</sequence>
<name>SMCE1_MOUSE</name>
<accession>O54941</accession>
<accession>Q8BPD9</accession>
<reference key="1">
    <citation type="journal article" date="1998" name="Proc. Natl. Acad. Sci. U.S.A.">
        <title>Architectural DNA binding by a high-mobility-group/kinesin-like subunit in mammalian SWI/SNF-related complexes.</title>
        <authorList>
            <person name="Wang W."/>
            <person name="Chi T."/>
            <person name="Xue Y."/>
            <person name="Zhou S."/>
            <person name="Kuo A."/>
            <person name="Crabtree G.R."/>
        </authorList>
    </citation>
    <scope>NUCLEOTIDE SEQUENCE [GENOMIC DNA]</scope>
</reference>
<reference key="2">
    <citation type="journal article" date="2005" name="Science">
        <title>The transcriptional landscape of the mammalian genome.</title>
        <authorList>
            <person name="Carninci P."/>
            <person name="Kasukawa T."/>
            <person name="Katayama S."/>
            <person name="Gough J."/>
            <person name="Frith M.C."/>
            <person name="Maeda N."/>
            <person name="Oyama R."/>
            <person name="Ravasi T."/>
            <person name="Lenhard B."/>
            <person name="Wells C."/>
            <person name="Kodzius R."/>
            <person name="Shimokawa K."/>
            <person name="Bajic V.B."/>
            <person name="Brenner S.E."/>
            <person name="Batalov S."/>
            <person name="Forrest A.R."/>
            <person name="Zavolan M."/>
            <person name="Davis M.J."/>
            <person name="Wilming L.G."/>
            <person name="Aidinis V."/>
            <person name="Allen J.E."/>
            <person name="Ambesi-Impiombato A."/>
            <person name="Apweiler R."/>
            <person name="Aturaliya R.N."/>
            <person name="Bailey T.L."/>
            <person name="Bansal M."/>
            <person name="Baxter L."/>
            <person name="Beisel K.W."/>
            <person name="Bersano T."/>
            <person name="Bono H."/>
            <person name="Chalk A.M."/>
            <person name="Chiu K.P."/>
            <person name="Choudhary V."/>
            <person name="Christoffels A."/>
            <person name="Clutterbuck D.R."/>
            <person name="Crowe M.L."/>
            <person name="Dalla E."/>
            <person name="Dalrymple B.P."/>
            <person name="de Bono B."/>
            <person name="Della Gatta G."/>
            <person name="di Bernardo D."/>
            <person name="Down T."/>
            <person name="Engstrom P."/>
            <person name="Fagiolini M."/>
            <person name="Faulkner G."/>
            <person name="Fletcher C.F."/>
            <person name="Fukushima T."/>
            <person name="Furuno M."/>
            <person name="Futaki S."/>
            <person name="Gariboldi M."/>
            <person name="Georgii-Hemming P."/>
            <person name="Gingeras T.R."/>
            <person name="Gojobori T."/>
            <person name="Green R.E."/>
            <person name="Gustincich S."/>
            <person name="Harbers M."/>
            <person name="Hayashi Y."/>
            <person name="Hensch T.K."/>
            <person name="Hirokawa N."/>
            <person name="Hill D."/>
            <person name="Huminiecki L."/>
            <person name="Iacono M."/>
            <person name="Ikeo K."/>
            <person name="Iwama A."/>
            <person name="Ishikawa T."/>
            <person name="Jakt M."/>
            <person name="Kanapin A."/>
            <person name="Katoh M."/>
            <person name="Kawasawa Y."/>
            <person name="Kelso J."/>
            <person name="Kitamura H."/>
            <person name="Kitano H."/>
            <person name="Kollias G."/>
            <person name="Krishnan S.P."/>
            <person name="Kruger A."/>
            <person name="Kummerfeld S.K."/>
            <person name="Kurochkin I.V."/>
            <person name="Lareau L.F."/>
            <person name="Lazarevic D."/>
            <person name="Lipovich L."/>
            <person name="Liu J."/>
            <person name="Liuni S."/>
            <person name="McWilliam S."/>
            <person name="Madan Babu M."/>
            <person name="Madera M."/>
            <person name="Marchionni L."/>
            <person name="Matsuda H."/>
            <person name="Matsuzawa S."/>
            <person name="Miki H."/>
            <person name="Mignone F."/>
            <person name="Miyake S."/>
            <person name="Morris K."/>
            <person name="Mottagui-Tabar S."/>
            <person name="Mulder N."/>
            <person name="Nakano N."/>
            <person name="Nakauchi H."/>
            <person name="Ng P."/>
            <person name="Nilsson R."/>
            <person name="Nishiguchi S."/>
            <person name="Nishikawa S."/>
            <person name="Nori F."/>
            <person name="Ohara O."/>
            <person name="Okazaki Y."/>
            <person name="Orlando V."/>
            <person name="Pang K.C."/>
            <person name="Pavan W.J."/>
            <person name="Pavesi G."/>
            <person name="Pesole G."/>
            <person name="Petrovsky N."/>
            <person name="Piazza S."/>
            <person name="Reed J."/>
            <person name="Reid J.F."/>
            <person name="Ring B.Z."/>
            <person name="Ringwald M."/>
            <person name="Rost B."/>
            <person name="Ruan Y."/>
            <person name="Salzberg S.L."/>
            <person name="Sandelin A."/>
            <person name="Schneider C."/>
            <person name="Schoenbach C."/>
            <person name="Sekiguchi K."/>
            <person name="Semple C.A."/>
            <person name="Seno S."/>
            <person name="Sessa L."/>
            <person name="Sheng Y."/>
            <person name="Shibata Y."/>
            <person name="Shimada H."/>
            <person name="Shimada K."/>
            <person name="Silva D."/>
            <person name="Sinclair B."/>
            <person name="Sperling S."/>
            <person name="Stupka E."/>
            <person name="Sugiura K."/>
            <person name="Sultana R."/>
            <person name="Takenaka Y."/>
            <person name="Taki K."/>
            <person name="Tammoja K."/>
            <person name="Tan S.L."/>
            <person name="Tang S."/>
            <person name="Taylor M.S."/>
            <person name="Tegner J."/>
            <person name="Teichmann S.A."/>
            <person name="Ueda H.R."/>
            <person name="van Nimwegen E."/>
            <person name="Verardo R."/>
            <person name="Wei C.L."/>
            <person name="Yagi K."/>
            <person name="Yamanishi H."/>
            <person name="Zabarovsky E."/>
            <person name="Zhu S."/>
            <person name="Zimmer A."/>
            <person name="Hide W."/>
            <person name="Bult C."/>
            <person name="Grimmond S.M."/>
            <person name="Teasdale R.D."/>
            <person name="Liu E.T."/>
            <person name="Brusic V."/>
            <person name="Quackenbush J."/>
            <person name="Wahlestedt C."/>
            <person name="Mattick J.S."/>
            <person name="Hume D.A."/>
            <person name="Kai C."/>
            <person name="Sasaki D."/>
            <person name="Tomaru Y."/>
            <person name="Fukuda S."/>
            <person name="Kanamori-Katayama M."/>
            <person name="Suzuki M."/>
            <person name="Aoki J."/>
            <person name="Arakawa T."/>
            <person name="Iida J."/>
            <person name="Imamura K."/>
            <person name="Itoh M."/>
            <person name="Kato T."/>
            <person name="Kawaji H."/>
            <person name="Kawagashira N."/>
            <person name="Kawashima T."/>
            <person name="Kojima M."/>
            <person name="Kondo S."/>
            <person name="Konno H."/>
            <person name="Nakano K."/>
            <person name="Ninomiya N."/>
            <person name="Nishio T."/>
            <person name="Okada M."/>
            <person name="Plessy C."/>
            <person name="Shibata K."/>
            <person name="Shiraki T."/>
            <person name="Suzuki S."/>
            <person name="Tagami M."/>
            <person name="Waki K."/>
            <person name="Watahiki A."/>
            <person name="Okamura-Oho Y."/>
            <person name="Suzuki H."/>
            <person name="Kawai J."/>
            <person name="Hayashizaki Y."/>
        </authorList>
    </citation>
    <scope>NUCLEOTIDE SEQUENCE [LARGE SCALE MRNA]</scope>
    <source>
        <strain>C57BL/6J</strain>
        <tissue>Embryo</tissue>
    </source>
</reference>
<reference key="3">
    <citation type="journal article" date="2004" name="Genome Res.">
        <title>The status, quality, and expansion of the NIH full-length cDNA project: the Mammalian Gene Collection (MGC).</title>
        <authorList>
            <consortium name="The MGC Project Team"/>
        </authorList>
    </citation>
    <scope>NUCLEOTIDE SEQUENCE [LARGE SCALE MRNA]</scope>
    <source>
        <strain>C57BL/6J</strain>
        <strain>FVB/N</strain>
        <tissue>Brain</tissue>
        <tissue>Colon</tissue>
        <tissue>Mammary tumor</tissue>
    </source>
</reference>
<reference key="4">
    <citation type="journal article" date="2002" name="EMBO J.">
        <title>Targeting of SWI/SNF chromatin remodelling complexes to estrogen-responsive genes.</title>
        <authorList>
            <person name="Belandia B."/>
            <person name="Orford R.L."/>
            <person name="Hurst H.C."/>
            <person name="Parker M.G."/>
        </authorList>
    </citation>
    <scope>FUNCTION</scope>
    <scope>DOMAIN</scope>
</reference>
<reference key="5">
    <citation type="journal article" date="2002" name="Nature">
        <title>Reciprocal regulation of CD4/CD8 expression by SWI/SNF-like BAF complexes.</title>
        <authorList>
            <person name="Chi T.H."/>
            <person name="Wan M."/>
            <person name="Zhao K."/>
            <person name="Taniuchi I."/>
            <person name="Chen L."/>
            <person name="Littman D.R."/>
            <person name="Crabtree G.R."/>
        </authorList>
    </citation>
    <scope>FUNCTION</scope>
</reference>
<reference key="6">
    <citation type="journal article" date="2007" name="Neuron">
        <title>An essential switch in subunit composition of a chromatin remodeling complex during neural development.</title>
        <authorList>
            <person name="Lessard J."/>
            <person name="Wu J.I."/>
            <person name="Ranish J.A."/>
            <person name="Wan M."/>
            <person name="Winslow M.M."/>
            <person name="Staahl B.T."/>
            <person name="Wu H."/>
            <person name="Aebersold R."/>
            <person name="Graef I.A."/>
            <person name="Crabtree G.R."/>
        </authorList>
    </citation>
    <scope>FUNCTION OF THE NBAF AND NPBAF COMPLEXES</scope>
    <scope>IDENTIFICATION BY MASS SPECTROMETRY</scope>
    <scope>IDENTIFICATION IN THE NBAF AND NPBAF COMPLEXES</scope>
    <scope>DEVELOPMENTAL STAGE</scope>
</reference>
<reference key="7">
    <citation type="journal article" date="2010" name="Cell">
        <title>A tissue-specific atlas of mouse protein phosphorylation and expression.</title>
        <authorList>
            <person name="Huttlin E.L."/>
            <person name="Jedrychowski M.P."/>
            <person name="Elias J.E."/>
            <person name="Goswami T."/>
            <person name="Rad R."/>
            <person name="Beausoleil S.A."/>
            <person name="Villen J."/>
            <person name="Haas W."/>
            <person name="Sowa M.E."/>
            <person name="Gygi S.P."/>
        </authorList>
    </citation>
    <scope>IDENTIFICATION BY MASS SPECTROMETRY [LARGE SCALE ANALYSIS]</scope>
    <source>
        <tissue>Kidney</tissue>
        <tissue>Spleen</tissue>
    </source>
</reference>
<protein>
    <recommendedName>
        <fullName>SWI/SNF-related matrix-associated actin-dependent regulator of chromatin subfamily E member 1</fullName>
    </recommendedName>
    <alternativeName>
        <fullName>BRG1-associated factor 57</fullName>
        <shortName>BAF57</shortName>
    </alternativeName>
</protein>
<organism>
    <name type="scientific">Mus musculus</name>
    <name type="common">Mouse</name>
    <dbReference type="NCBI Taxonomy" id="10090"/>
    <lineage>
        <taxon>Eukaryota</taxon>
        <taxon>Metazoa</taxon>
        <taxon>Chordata</taxon>
        <taxon>Craniata</taxon>
        <taxon>Vertebrata</taxon>
        <taxon>Euteleostomi</taxon>
        <taxon>Mammalia</taxon>
        <taxon>Eutheria</taxon>
        <taxon>Euarchontoglires</taxon>
        <taxon>Glires</taxon>
        <taxon>Rodentia</taxon>
        <taxon>Myomorpha</taxon>
        <taxon>Muroidea</taxon>
        <taxon>Muridae</taxon>
        <taxon>Murinae</taxon>
        <taxon>Mus</taxon>
        <taxon>Mus</taxon>
    </lineage>
</organism>
<gene>
    <name type="primary">Smarce1</name>
    <name type="synonym">Baf57</name>
</gene>
<comment type="function">
    <text evidence="2 6 7 8">Involved in transcriptional activation and repression of select genes by chromatin remodeling (alteration of DNA-nucleosome topology). Component of SWI/SNF chromatin remodeling complexes that carry out key enzymatic activities, changing chromatin structure by altering DNA-histone contacts within a nucleosome in an ATP-dependent manner (PubMed:12110891). Belongs to the neural progenitors-specific chromatin remodeling complex (npBAF complex) and the neuron-specific chromatin remodeling complex (nBAF complex). During neural development a switch from a stem/progenitor to a postmitotic chromatin remodeling mechanism occurs as neurons exit the cell cycle and become committed to their adult state. The transition from proliferating neural stem/progenitor cells to postmitotic neurons requires a switch in subunit composition of the npBAF and nBAF complexes. As neural progenitors exit mitosis and differentiate into neurons, npBAF complexes which contain ACTL6A/BAF53A and PHF10/BAF45A, are exchanged for homologous alternative ACTL6B/BAF53B and DPF1/BAF45B or DPF3/BAF45C subunits in neuron-specific complexes (nBAF). The npBAF complex is essential for the self-renewal/proliferative capacity of the multipotent neural stem cells. The nBAF complex along with CREST plays a role regulating the activity of genes essential for dendrite growth (PubMed:17640523). Also specifically interacts with the CoREST corepressor resulting in repression of neuronal specific gene promoters in non-neuronal cells (By similarity). Required for the coactivation of estrogen responsive promoters by SWI/SNF complexes and the SRC/p160 family of histone acetyltransferases (HATs) (PubMed:12145209).</text>
</comment>
<comment type="subunit">
    <text evidence="1 2 8">Component of the multiprotein chromatin-remodeling complexes SWI/SNF: SWI/SNF-A (BAF), SWI/SNF-B (PBAF) and related complexes. The canonical complex contains a catalytic subunit (either SMARCA4/BRG1/BAF190A or SMARCA2/BRM/BAF190B), and at least SMARCE1, ACTL6A/BAF53, SMARCC1/BAF155, SMARCC2/BAF170, and SMARCB1/SNF5/BAF47. Other subunits specific to each of the complexes may also be present permitting several possible combinations developmentally and tissue specific. Component of the BAF complex, which includes at least actin (ACTB), ARID1A/BAF250A, ARID1B/BAF250B, SMARCA2/BRM/BAF190B, SMARCA4/BRG1/BAF190A, ACTL6A/BAF53, ACTL6B/BAF53B, SMARCE1/BAF57, SMARCC1/BAF155, SMARCC2/BAF170, SMARCB1/SNF5/INI1, and one or more SMARCD1/BAF60A, SMARCD2/BAF60B, or SMARCD3/BAF60C. In muscle cells, the BAF complex also contains DPF3. Component of neural progenitors-specific chromatin remodeling complex (npBAF complex) composed of at least, ARID1A/BAF250A or ARID1B/BAF250B, SMARCD1/BAF60A, SMARCD3/BAF60C, SMARCA2/BRM/BAF190B, SMARCA4/BRG1/BAF190A, SMARCB1/BAF47, SMARCC1/BAF155, SMARCE1/BAF57, SMARCC2/BAF170, PHF10/BAF45A, ACTL6A/BAF53A and actin. Component of neuron-specific chromatin remodeling complex (nBAF complex) composed of at least, ARID1A/BAF250A or ARID1B/BAF250B, SMARCD1/BAF60A, SMARCD3/BAF60C, SMARCA2/BRM/BAF190B, SMARCA4/BRG1/BAF190A, SMARCB1/BAF47, SMARCC1/BAF155, SMARCE1/BAF57, SMARCC2/BAF170, DPF1/BAF45B, DPF3/BAF45C, ACTL6B/BAF53B and actin. May be a component of the SWI/SNF-B (PBAF) chromatin remodeling complex, at least composed of SMARCA4/BRG1, SMARCB1/BAF47/SNF5, ACTL6A/BAF53A or ACTL6B/BAF53B, SMARCE1/BAF57, SMARCD1/BAF60A, SMARCD2/BAF60B, perhaps SMARCD3/BAF60C, SMARCC1/BAF155, SMARCC2/BAF170, PBRM1/BAF180, ARID2/BAF200 and actin (ACTB) (PubMed:17640523). Interacts with BRDT (By similarity). Also binds to the SRC/p160 family of histone acetyltransferases (HATs) composed of NCOA1, NCOA2, and NCOA3. Interacts with RCOR1/CoREST, NR3C1 and ZMIM2/ZIMP7 (By similarity).</text>
</comment>
<comment type="subcellular location">
    <subcellularLocation>
        <location evidence="4">Nucleus</location>
    </subcellularLocation>
</comment>
<comment type="developmental stage">
    <text evidence="8">Expressed ubiquitously throughout the developing spinal cord, brain and other embryonic tissues at 10.5-16.5 dpc.</text>
</comment>
<comment type="domain">
    <text evidence="6">The HMG domain is essential for CD4 silencing and CD8 activation; mutation of this domain blocks thymus development.</text>
</comment>
<comment type="PTM">
    <text evidence="2">Ubiquitinated by TRIP12, leading to its degradation by the proteasome. Ubiquitination is prevented upon interaction between TRIP12 and SMARCC1 (By similarity).</text>
</comment>
<comment type="sequence caution" evidence="9">
    <conflict type="erroneous termination">
        <sequence resource="EMBL-CDS" id="BAC36233"/>
    </conflict>
    <text>Truncated C-terminus.</text>
</comment>
<comment type="sequence caution" evidence="9">
    <conflict type="frameshift">
        <sequence resource="EMBL-CDS" id="BAC36233"/>
    </conflict>
</comment>
<comment type="sequence caution" evidence="9">
    <conflict type="miscellaneous discrepancy">
        <sequence resource="EMBL-CDS" id="BAC36233"/>
    </conflict>
    <text>Sequencing errors.</text>
</comment>